<protein>
    <recommendedName>
        <fullName evidence="1">UvrABC system protein C</fullName>
        <shortName evidence="1">Protein UvrC</shortName>
    </recommendedName>
    <alternativeName>
        <fullName evidence="1">Excinuclease ABC subunit C</fullName>
    </alternativeName>
</protein>
<feature type="chain" id="PRO_0000138351" description="UvrABC system protein C">
    <location>
        <begin position="1"/>
        <end position="598"/>
    </location>
</feature>
<feature type="domain" description="GIY-YIG" evidence="1">
    <location>
        <begin position="14"/>
        <end position="91"/>
    </location>
</feature>
<feature type="domain" description="UVR" evidence="1">
    <location>
        <begin position="196"/>
        <end position="231"/>
    </location>
</feature>
<sequence>MNELIKHKLELLPDSPGCYLHKDKEGTIIYVGKAKNLKKRVRSYFRGSHDTKTELLVSEIVDFEYIVTESDTEALLLEINLIQKNMPKYNIKLKDDKSYPFLKITNESFPRLVITRYIKKNDGLYFGPYPDSYTANEVKKLLDRIFPFKKCKNPINKVCFYYHLGQCCAHTICHTDKAYWDRLIDDVKHFLNGKDDKIIEDLRSKMLAASEEMAFERAAEYRDLISGIATMRTKQRVMSKDLQDRDIFGYYVDKGWMCVQVFFVRQGKLIQRDVNLFPYYNDAEEDFLTYMGQFYQDKQHFIPKEVFIPEAIDEELVAAIVPTKIIKPKRGEKKQLVALATKNARVSLQQKFDLLEKDIKKTSGAIDNLGHLLGINKPVRIEAFDNSNIQGTSPVAAMVVFVDGKPSKKDYRKFKVKTVVGPDDYASMREVLFRRYSRVKKEGLQAPNLIIVDGGVGQVNVAKDVIEKQLGLTIPVAGLQKNDKHQTHDLLFGNPLEVVPLPRRSEEFFLLHRIQDEVHRFAVTFHRQVRRKNSFSSTLDHISGLGPKRKQLLLRHFKTITAIASATSEEIQALGIPKTVVEAIQQQITDNKNDRSSP</sequence>
<organism>
    <name type="scientific">Streptococcus pyogenes serotype M18 (strain MGAS8232)</name>
    <dbReference type="NCBI Taxonomy" id="186103"/>
    <lineage>
        <taxon>Bacteria</taxon>
        <taxon>Bacillati</taxon>
        <taxon>Bacillota</taxon>
        <taxon>Bacilli</taxon>
        <taxon>Lactobacillales</taxon>
        <taxon>Streptococcaceae</taxon>
        <taxon>Streptococcus</taxon>
    </lineage>
</organism>
<proteinExistence type="inferred from homology"/>
<keyword id="KW-0963">Cytoplasm</keyword>
<keyword id="KW-0227">DNA damage</keyword>
<keyword id="KW-0228">DNA excision</keyword>
<keyword id="KW-0234">DNA repair</keyword>
<keyword id="KW-0267">Excision nuclease</keyword>
<keyword id="KW-0742">SOS response</keyword>
<reference key="1">
    <citation type="journal article" date="2002" name="Proc. Natl. Acad. Sci. U.S.A.">
        <title>Genome sequence and comparative microarray analysis of serotype M18 group A Streptococcus strains associated with acute rheumatic fever outbreaks.</title>
        <authorList>
            <person name="Smoot J.C."/>
            <person name="Barbian K.D."/>
            <person name="Van Gompel J.J."/>
            <person name="Smoot L.M."/>
            <person name="Chaussee M.S."/>
            <person name="Sylva G.L."/>
            <person name="Sturdevant D.E."/>
            <person name="Ricklefs S.M."/>
            <person name="Porcella S.F."/>
            <person name="Parkins L.D."/>
            <person name="Beres S.B."/>
            <person name="Campbell D.S."/>
            <person name="Smith T.M."/>
            <person name="Zhang Q."/>
            <person name="Kapur V."/>
            <person name="Daly J.A."/>
            <person name="Veasy L.G."/>
            <person name="Musser J.M."/>
        </authorList>
    </citation>
    <scope>NUCLEOTIDE SEQUENCE [LARGE SCALE GENOMIC DNA]</scope>
    <source>
        <strain>MGAS8232</strain>
    </source>
</reference>
<comment type="function">
    <text evidence="1">The UvrABC repair system catalyzes the recognition and processing of DNA lesions. UvrC both incises the 5' and 3' sides of the lesion. The N-terminal half is responsible for the 3' incision and the C-terminal half is responsible for the 5' incision.</text>
</comment>
<comment type="subunit">
    <text evidence="1">Interacts with UvrB in an incision complex.</text>
</comment>
<comment type="subcellular location">
    <subcellularLocation>
        <location evidence="1">Cytoplasm</location>
    </subcellularLocation>
</comment>
<comment type="similarity">
    <text evidence="1">Belongs to the UvrC family.</text>
</comment>
<accession>Q8P163</accession>
<name>UVRC_STRP8</name>
<dbReference type="EMBL" id="AE009949">
    <property type="protein sequence ID" value="AAL97672.1"/>
    <property type="molecule type" value="Genomic_DNA"/>
</dbReference>
<dbReference type="RefSeq" id="WP_011017730.1">
    <property type="nucleotide sequence ID" value="NC_003485.1"/>
</dbReference>
<dbReference type="SMR" id="Q8P163"/>
<dbReference type="KEGG" id="spm:spyM18_1042"/>
<dbReference type="HOGENOM" id="CLU_014841_3_2_9"/>
<dbReference type="GO" id="GO:0005737">
    <property type="term" value="C:cytoplasm"/>
    <property type="evidence" value="ECO:0007669"/>
    <property type="project" value="UniProtKB-SubCell"/>
</dbReference>
<dbReference type="GO" id="GO:0009380">
    <property type="term" value="C:excinuclease repair complex"/>
    <property type="evidence" value="ECO:0007669"/>
    <property type="project" value="InterPro"/>
</dbReference>
<dbReference type="GO" id="GO:0003677">
    <property type="term" value="F:DNA binding"/>
    <property type="evidence" value="ECO:0007669"/>
    <property type="project" value="UniProtKB-UniRule"/>
</dbReference>
<dbReference type="GO" id="GO:0009381">
    <property type="term" value="F:excinuclease ABC activity"/>
    <property type="evidence" value="ECO:0007669"/>
    <property type="project" value="UniProtKB-UniRule"/>
</dbReference>
<dbReference type="GO" id="GO:0006289">
    <property type="term" value="P:nucleotide-excision repair"/>
    <property type="evidence" value="ECO:0007669"/>
    <property type="project" value="UniProtKB-UniRule"/>
</dbReference>
<dbReference type="GO" id="GO:0009432">
    <property type="term" value="P:SOS response"/>
    <property type="evidence" value="ECO:0007669"/>
    <property type="project" value="UniProtKB-UniRule"/>
</dbReference>
<dbReference type="CDD" id="cd10434">
    <property type="entry name" value="GIY-YIG_UvrC_Cho"/>
    <property type="match status" value="1"/>
</dbReference>
<dbReference type="FunFam" id="3.30.420.340:FF:000002">
    <property type="entry name" value="UvrABC system protein C"/>
    <property type="match status" value="1"/>
</dbReference>
<dbReference type="FunFam" id="3.40.1440.10:FF:000001">
    <property type="entry name" value="UvrABC system protein C"/>
    <property type="match status" value="1"/>
</dbReference>
<dbReference type="Gene3D" id="1.10.150.20">
    <property type="entry name" value="5' to 3' exonuclease, C-terminal subdomain"/>
    <property type="match status" value="1"/>
</dbReference>
<dbReference type="Gene3D" id="3.40.1440.10">
    <property type="entry name" value="GIY-YIG endonuclease"/>
    <property type="match status" value="1"/>
</dbReference>
<dbReference type="Gene3D" id="4.10.860.10">
    <property type="entry name" value="UVR domain"/>
    <property type="match status" value="1"/>
</dbReference>
<dbReference type="Gene3D" id="3.30.420.340">
    <property type="entry name" value="UvrC, RNAse H endonuclease domain"/>
    <property type="match status" value="1"/>
</dbReference>
<dbReference type="HAMAP" id="MF_00203">
    <property type="entry name" value="UvrC"/>
    <property type="match status" value="1"/>
</dbReference>
<dbReference type="InterPro" id="IPR000305">
    <property type="entry name" value="GIY-YIG_endonuc"/>
</dbReference>
<dbReference type="InterPro" id="IPR035901">
    <property type="entry name" value="GIY-YIG_endonuc_sf"/>
</dbReference>
<dbReference type="InterPro" id="IPR047296">
    <property type="entry name" value="GIY-YIG_UvrC_Cho"/>
</dbReference>
<dbReference type="InterPro" id="IPR010994">
    <property type="entry name" value="RuvA_2-like"/>
</dbReference>
<dbReference type="InterPro" id="IPR001943">
    <property type="entry name" value="UVR_dom"/>
</dbReference>
<dbReference type="InterPro" id="IPR036876">
    <property type="entry name" value="UVR_dom_sf"/>
</dbReference>
<dbReference type="InterPro" id="IPR050066">
    <property type="entry name" value="UvrABC_protein_C"/>
</dbReference>
<dbReference type="InterPro" id="IPR004791">
    <property type="entry name" value="UvrC"/>
</dbReference>
<dbReference type="InterPro" id="IPR001162">
    <property type="entry name" value="UvrC_RNase_H_dom"/>
</dbReference>
<dbReference type="InterPro" id="IPR038476">
    <property type="entry name" value="UvrC_RNase_H_dom_sf"/>
</dbReference>
<dbReference type="NCBIfam" id="TIGR00194">
    <property type="entry name" value="uvrC"/>
    <property type="match status" value="1"/>
</dbReference>
<dbReference type="PANTHER" id="PTHR30562:SF1">
    <property type="entry name" value="UVRABC SYSTEM PROTEIN C"/>
    <property type="match status" value="1"/>
</dbReference>
<dbReference type="PANTHER" id="PTHR30562">
    <property type="entry name" value="UVRC/OXIDOREDUCTASE"/>
    <property type="match status" value="1"/>
</dbReference>
<dbReference type="Pfam" id="PF01541">
    <property type="entry name" value="GIY-YIG"/>
    <property type="match status" value="1"/>
</dbReference>
<dbReference type="Pfam" id="PF14520">
    <property type="entry name" value="HHH_5"/>
    <property type="match status" value="1"/>
</dbReference>
<dbReference type="Pfam" id="PF02151">
    <property type="entry name" value="UVR"/>
    <property type="match status" value="1"/>
</dbReference>
<dbReference type="Pfam" id="PF22920">
    <property type="entry name" value="UvrC_RNaseH"/>
    <property type="match status" value="1"/>
</dbReference>
<dbReference type="Pfam" id="PF08459">
    <property type="entry name" value="UvrC_RNaseH_dom"/>
    <property type="match status" value="1"/>
</dbReference>
<dbReference type="SMART" id="SM00465">
    <property type="entry name" value="GIYc"/>
    <property type="match status" value="1"/>
</dbReference>
<dbReference type="SUPFAM" id="SSF46600">
    <property type="entry name" value="C-terminal UvrC-binding domain of UvrB"/>
    <property type="match status" value="1"/>
</dbReference>
<dbReference type="SUPFAM" id="SSF82771">
    <property type="entry name" value="GIY-YIG endonuclease"/>
    <property type="match status" value="1"/>
</dbReference>
<dbReference type="SUPFAM" id="SSF47781">
    <property type="entry name" value="RuvA domain 2-like"/>
    <property type="match status" value="1"/>
</dbReference>
<dbReference type="PROSITE" id="PS50164">
    <property type="entry name" value="GIY_YIG"/>
    <property type="match status" value="1"/>
</dbReference>
<dbReference type="PROSITE" id="PS50151">
    <property type="entry name" value="UVR"/>
    <property type="match status" value="1"/>
</dbReference>
<dbReference type="PROSITE" id="PS50165">
    <property type="entry name" value="UVRC"/>
    <property type="match status" value="1"/>
</dbReference>
<gene>
    <name evidence="1" type="primary">uvrC</name>
    <name type="ordered locus">spyM18_1042</name>
</gene>
<evidence type="ECO:0000255" key="1">
    <source>
        <dbReference type="HAMAP-Rule" id="MF_00203"/>
    </source>
</evidence>